<organism>
    <name type="scientific">Rhizobium etli (strain CIAT 652)</name>
    <dbReference type="NCBI Taxonomy" id="491916"/>
    <lineage>
        <taxon>Bacteria</taxon>
        <taxon>Pseudomonadati</taxon>
        <taxon>Pseudomonadota</taxon>
        <taxon>Alphaproteobacteria</taxon>
        <taxon>Hyphomicrobiales</taxon>
        <taxon>Rhizobiaceae</taxon>
        <taxon>Rhizobium/Agrobacterium group</taxon>
        <taxon>Rhizobium</taxon>
    </lineage>
</organism>
<evidence type="ECO:0000255" key="1">
    <source>
        <dbReference type="HAMAP-Rule" id="MF_00001"/>
    </source>
</evidence>
<feature type="chain" id="PRO_1000088790" description="Aspartate carbamoyltransferase catalytic subunit">
    <location>
        <begin position="1"/>
        <end position="318"/>
    </location>
</feature>
<feature type="binding site" evidence="1">
    <location>
        <position position="59"/>
    </location>
    <ligand>
        <name>carbamoyl phosphate</name>
        <dbReference type="ChEBI" id="CHEBI:58228"/>
    </ligand>
</feature>
<feature type="binding site" evidence="1">
    <location>
        <position position="60"/>
    </location>
    <ligand>
        <name>carbamoyl phosphate</name>
        <dbReference type="ChEBI" id="CHEBI:58228"/>
    </ligand>
</feature>
<feature type="binding site" evidence="1">
    <location>
        <position position="87"/>
    </location>
    <ligand>
        <name>L-aspartate</name>
        <dbReference type="ChEBI" id="CHEBI:29991"/>
    </ligand>
</feature>
<feature type="binding site" evidence="1">
    <location>
        <position position="109"/>
    </location>
    <ligand>
        <name>carbamoyl phosphate</name>
        <dbReference type="ChEBI" id="CHEBI:58228"/>
    </ligand>
</feature>
<feature type="binding site" evidence="1">
    <location>
        <position position="137"/>
    </location>
    <ligand>
        <name>carbamoyl phosphate</name>
        <dbReference type="ChEBI" id="CHEBI:58228"/>
    </ligand>
</feature>
<feature type="binding site" evidence="1">
    <location>
        <position position="140"/>
    </location>
    <ligand>
        <name>carbamoyl phosphate</name>
        <dbReference type="ChEBI" id="CHEBI:58228"/>
    </ligand>
</feature>
<feature type="binding site" evidence="1">
    <location>
        <position position="170"/>
    </location>
    <ligand>
        <name>L-aspartate</name>
        <dbReference type="ChEBI" id="CHEBI:29991"/>
    </ligand>
</feature>
<feature type="binding site" evidence="1">
    <location>
        <position position="224"/>
    </location>
    <ligand>
        <name>L-aspartate</name>
        <dbReference type="ChEBI" id="CHEBI:29991"/>
    </ligand>
</feature>
<feature type="binding site" evidence="1">
    <location>
        <position position="265"/>
    </location>
    <ligand>
        <name>carbamoyl phosphate</name>
        <dbReference type="ChEBI" id="CHEBI:58228"/>
    </ligand>
</feature>
<feature type="binding site" evidence="1">
    <location>
        <position position="266"/>
    </location>
    <ligand>
        <name>carbamoyl phosphate</name>
        <dbReference type="ChEBI" id="CHEBI:58228"/>
    </ligand>
</feature>
<dbReference type="EC" id="2.1.3.2" evidence="1"/>
<dbReference type="EMBL" id="CP001074">
    <property type="protein sequence ID" value="ACE90689.1"/>
    <property type="molecule type" value="Genomic_DNA"/>
</dbReference>
<dbReference type="SMR" id="B3PW37"/>
<dbReference type="KEGG" id="rec:RHECIAT_CH0001715"/>
<dbReference type="eggNOG" id="COG0540">
    <property type="taxonomic scope" value="Bacteria"/>
</dbReference>
<dbReference type="HOGENOM" id="CLU_043846_2_0_5"/>
<dbReference type="UniPathway" id="UPA00070">
    <property type="reaction ID" value="UER00116"/>
</dbReference>
<dbReference type="Proteomes" id="UP000008817">
    <property type="component" value="Chromosome"/>
</dbReference>
<dbReference type="GO" id="GO:0005829">
    <property type="term" value="C:cytosol"/>
    <property type="evidence" value="ECO:0007669"/>
    <property type="project" value="TreeGrafter"/>
</dbReference>
<dbReference type="GO" id="GO:0016597">
    <property type="term" value="F:amino acid binding"/>
    <property type="evidence" value="ECO:0007669"/>
    <property type="project" value="InterPro"/>
</dbReference>
<dbReference type="GO" id="GO:0004070">
    <property type="term" value="F:aspartate carbamoyltransferase activity"/>
    <property type="evidence" value="ECO:0007669"/>
    <property type="project" value="UniProtKB-UniRule"/>
</dbReference>
<dbReference type="GO" id="GO:0006207">
    <property type="term" value="P:'de novo' pyrimidine nucleobase biosynthetic process"/>
    <property type="evidence" value="ECO:0007669"/>
    <property type="project" value="InterPro"/>
</dbReference>
<dbReference type="GO" id="GO:0044205">
    <property type="term" value="P:'de novo' UMP biosynthetic process"/>
    <property type="evidence" value="ECO:0007669"/>
    <property type="project" value="UniProtKB-UniRule"/>
</dbReference>
<dbReference type="GO" id="GO:0006520">
    <property type="term" value="P:amino acid metabolic process"/>
    <property type="evidence" value="ECO:0007669"/>
    <property type="project" value="InterPro"/>
</dbReference>
<dbReference type="FunFam" id="3.40.50.1370:FF:000007">
    <property type="entry name" value="Aspartate carbamoyltransferase"/>
    <property type="match status" value="1"/>
</dbReference>
<dbReference type="Gene3D" id="3.40.50.1370">
    <property type="entry name" value="Aspartate/ornithine carbamoyltransferase"/>
    <property type="match status" value="2"/>
</dbReference>
<dbReference type="HAMAP" id="MF_00001">
    <property type="entry name" value="Asp_carb_tr"/>
    <property type="match status" value="1"/>
</dbReference>
<dbReference type="InterPro" id="IPR006132">
    <property type="entry name" value="Asp/Orn_carbamoyltranf_P-bd"/>
</dbReference>
<dbReference type="InterPro" id="IPR006130">
    <property type="entry name" value="Asp/Orn_carbamoylTrfase"/>
</dbReference>
<dbReference type="InterPro" id="IPR036901">
    <property type="entry name" value="Asp/Orn_carbamoylTrfase_sf"/>
</dbReference>
<dbReference type="InterPro" id="IPR002082">
    <property type="entry name" value="Asp_carbamoyltransf"/>
</dbReference>
<dbReference type="InterPro" id="IPR006131">
    <property type="entry name" value="Asp_carbamoyltransf_Asp/Orn-bd"/>
</dbReference>
<dbReference type="NCBIfam" id="TIGR00670">
    <property type="entry name" value="asp_carb_tr"/>
    <property type="match status" value="1"/>
</dbReference>
<dbReference type="NCBIfam" id="NF002032">
    <property type="entry name" value="PRK00856.1"/>
    <property type="match status" value="1"/>
</dbReference>
<dbReference type="PANTHER" id="PTHR45753:SF6">
    <property type="entry name" value="ASPARTATE CARBAMOYLTRANSFERASE"/>
    <property type="match status" value="1"/>
</dbReference>
<dbReference type="PANTHER" id="PTHR45753">
    <property type="entry name" value="ORNITHINE CARBAMOYLTRANSFERASE, MITOCHONDRIAL"/>
    <property type="match status" value="1"/>
</dbReference>
<dbReference type="Pfam" id="PF00185">
    <property type="entry name" value="OTCace"/>
    <property type="match status" value="1"/>
</dbReference>
<dbReference type="Pfam" id="PF02729">
    <property type="entry name" value="OTCace_N"/>
    <property type="match status" value="1"/>
</dbReference>
<dbReference type="PRINTS" id="PR00100">
    <property type="entry name" value="AOTCASE"/>
</dbReference>
<dbReference type="PRINTS" id="PR00101">
    <property type="entry name" value="ATCASE"/>
</dbReference>
<dbReference type="SUPFAM" id="SSF53671">
    <property type="entry name" value="Aspartate/ornithine carbamoyltransferase"/>
    <property type="match status" value="1"/>
</dbReference>
<dbReference type="PROSITE" id="PS00097">
    <property type="entry name" value="CARBAMOYLTRANSFERASE"/>
    <property type="match status" value="1"/>
</dbReference>
<accession>B3PW37</accession>
<gene>
    <name evidence="1" type="primary">pyrB</name>
    <name type="ordered locus">RHECIAT_CH0001715</name>
</gene>
<comment type="function">
    <text evidence="1">Catalyzes the condensation of carbamoyl phosphate and aspartate to form carbamoyl aspartate and inorganic phosphate, the committed step in the de novo pyrimidine nucleotide biosynthesis pathway.</text>
</comment>
<comment type="catalytic activity">
    <reaction evidence="1">
        <text>carbamoyl phosphate + L-aspartate = N-carbamoyl-L-aspartate + phosphate + H(+)</text>
        <dbReference type="Rhea" id="RHEA:20013"/>
        <dbReference type="ChEBI" id="CHEBI:15378"/>
        <dbReference type="ChEBI" id="CHEBI:29991"/>
        <dbReference type="ChEBI" id="CHEBI:32814"/>
        <dbReference type="ChEBI" id="CHEBI:43474"/>
        <dbReference type="ChEBI" id="CHEBI:58228"/>
        <dbReference type="EC" id="2.1.3.2"/>
    </reaction>
</comment>
<comment type="pathway">
    <text evidence="1">Pyrimidine metabolism; UMP biosynthesis via de novo pathway; (S)-dihydroorotate from bicarbonate: step 2/3.</text>
</comment>
<comment type="subunit">
    <text evidence="1">Heterododecamer (2C3:3R2) of six catalytic PyrB chains organized as two trimers (C3), and six regulatory PyrI chains organized as three dimers (R2).</text>
</comment>
<comment type="similarity">
    <text evidence="1">Belongs to the aspartate/ornithine carbamoyltransferase superfamily. ATCase family.</text>
</comment>
<name>PYRB_RHIE6</name>
<protein>
    <recommendedName>
        <fullName evidence="1">Aspartate carbamoyltransferase catalytic subunit</fullName>
        <ecNumber evidence="1">2.1.3.2</ecNumber>
    </recommendedName>
    <alternativeName>
        <fullName evidence="1">Aspartate transcarbamylase</fullName>
        <shortName evidence="1">ATCase</shortName>
    </alternativeName>
</protein>
<keyword id="KW-0665">Pyrimidine biosynthesis</keyword>
<keyword id="KW-0808">Transferase</keyword>
<reference key="1">
    <citation type="journal article" date="2010" name="Appl. Environ. Microbiol.">
        <title>Conserved symbiotic plasmid DNA sequences in the multireplicon pangenomic structure of Rhizobium etli.</title>
        <authorList>
            <person name="Gonzalez V."/>
            <person name="Acosta J.L."/>
            <person name="Santamaria R.I."/>
            <person name="Bustos P."/>
            <person name="Fernandez J.L."/>
            <person name="Hernandez Gonzalez I.L."/>
            <person name="Diaz R."/>
            <person name="Flores M."/>
            <person name="Palacios R."/>
            <person name="Mora J."/>
            <person name="Davila G."/>
        </authorList>
    </citation>
    <scope>NUCLEOTIDE SEQUENCE [LARGE SCALE GENOMIC DNA]</scope>
    <source>
        <strain>CIAT 652</strain>
    </source>
</reference>
<sequence length="318" mass="34517">MVFFPHRHLIGIKGLTEQDITYLLDKADEAVKISRQREKKTSTLRGLTQINLFFEASTRTQASFELAGKRLGADVMNMSVGNSSVKKGETLIDTAMTLNAMRPDVLVIRHSSAGAAALLAQKVSCSVVNAGDGQHEHPTQALLDALTIRRAKGKLSRIIVAICGDVLHSRVARSNILLLNAMGARVRVVAPATLLPSGIAEMGVEVFHSMQEGLKDADVVMMLRLQRERMSGAFVPSVREYYHFYGLDAETLKAAKEDTLVMHPGPMNRGVEIASEVADGPQSVIAEQVEMGVAVRMAVMETLLVSQNQGPRTDGMKA</sequence>
<proteinExistence type="inferred from homology"/>